<gene>
    <name evidence="1" type="primary">folD</name>
    <name type="ordered locus">ECA3149</name>
</gene>
<proteinExistence type="inferred from homology"/>
<protein>
    <recommendedName>
        <fullName evidence="1">Bifunctional protein FolD</fullName>
    </recommendedName>
    <domain>
        <recommendedName>
            <fullName evidence="1">Methylenetetrahydrofolate dehydrogenase</fullName>
            <ecNumber evidence="1">1.5.1.5</ecNumber>
        </recommendedName>
    </domain>
    <domain>
        <recommendedName>
            <fullName evidence="1">Methenyltetrahydrofolate cyclohydrolase</fullName>
            <ecNumber evidence="1">3.5.4.9</ecNumber>
        </recommendedName>
    </domain>
</protein>
<sequence length="287" mass="31018">MAAKIIDGKTIAQQVKDEVAARVTQRLAEGKRAPGLAVVLVGDNPASQIYVTSKRKVCEEVGFISRSYDLPITTTESELLALIDQLNADQAIDGILVQLPLPEGIDNTKVIERIAPDKDVDGFHPYNVGRLCQRAPLLRACTPRGIITLLERYNIDTFGLNAVVVGASNIVGRPMSLELLLAGCTTTVTHRFTKNLRHHIENADLLVVAVGKPGFIPGEWIKPGAIVLDVGINRLESGKVVGDIEFETAQERASYISPVPGGVGPMTVATLIQNTLQACEEYHDHAE</sequence>
<feature type="chain" id="PRO_0000268345" description="Bifunctional protein FolD">
    <location>
        <begin position="1"/>
        <end position="287"/>
    </location>
</feature>
<feature type="binding site" evidence="1">
    <location>
        <begin position="166"/>
        <end position="168"/>
    </location>
    <ligand>
        <name>NADP(+)</name>
        <dbReference type="ChEBI" id="CHEBI:58349"/>
    </ligand>
</feature>
<feature type="binding site" evidence="1">
    <location>
        <position position="232"/>
    </location>
    <ligand>
        <name>NADP(+)</name>
        <dbReference type="ChEBI" id="CHEBI:58349"/>
    </ligand>
</feature>
<comment type="function">
    <text evidence="1">Catalyzes the oxidation of 5,10-methylenetetrahydrofolate to 5,10-methenyltetrahydrofolate and then the hydrolysis of 5,10-methenyltetrahydrofolate to 10-formyltetrahydrofolate.</text>
</comment>
<comment type="catalytic activity">
    <reaction evidence="1">
        <text>(6R)-5,10-methylene-5,6,7,8-tetrahydrofolate + NADP(+) = (6R)-5,10-methenyltetrahydrofolate + NADPH</text>
        <dbReference type="Rhea" id="RHEA:22812"/>
        <dbReference type="ChEBI" id="CHEBI:15636"/>
        <dbReference type="ChEBI" id="CHEBI:57455"/>
        <dbReference type="ChEBI" id="CHEBI:57783"/>
        <dbReference type="ChEBI" id="CHEBI:58349"/>
        <dbReference type="EC" id="1.5.1.5"/>
    </reaction>
</comment>
<comment type="catalytic activity">
    <reaction evidence="1">
        <text>(6R)-5,10-methenyltetrahydrofolate + H2O = (6R)-10-formyltetrahydrofolate + H(+)</text>
        <dbReference type="Rhea" id="RHEA:23700"/>
        <dbReference type="ChEBI" id="CHEBI:15377"/>
        <dbReference type="ChEBI" id="CHEBI:15378"/>
        <dbReference type="ChEBI" id="CHEBI:57455"/>
        <dbReference type="ChEBI" id="CHEBI:195366"/>
        <dbReference type="EC" id="3.5.4.9"/>
    </reaction>
</comment>
<comment type="pathway">
    <text evidence="1">One-carbon metabolism; tetrahydrofolate interconversion.</text>
</comment>
<comment type="subunit">
    <text evidence="1">Homodimer.</text>
</comment>
<comment type="similarity">
    <text evidence="1">Belongs to the tetrahydrofolate dehydrogenase/cyclohydrolase family.</text>
</comment>
<reference key="1">
    <citation type="journal article" date="2004" name="Proc. Natl. Acad. Sci. U.S.A.">
        <title>Genome sequence of the enterobacterial phytopathogen Erwinia carotovora subsp. atroseptica and characterization of virulence factors.</title>
        <authorList>
            <person name="Bell K.S."/>
            <person name="Sebaihia M."/>
            <person name="Pritchard L."/>
            <person name="Holden M.T.G."/>
            <person name="Hyman L.J."/>
            <person name="Holeva M.C."/>
            <person name="Thomson N.R."/>
            <person name="Bentley S.D."/>
            <person name="Churcher L.J.C."/>
            <person name="Mungall K."/>
            <person name="Atkin R."/>
            <person name="Bason N."/>
            <person name="Brooks K."/>
            <person name="Chillingworth T."/>
            <person name="Clark K."/>
            <person name="Doggett J."/>
            <person name="Fraser A."/>
            <person name="Hance Z."/>
            <person name="Hauser H."/>
            <person name="Jagels K."/>
            <person name="Moule S."/>
            <person name="Norbertczak H."/>
            <person name="Ormond D."/>
            <person name="Price C."/>
            <person name="Quail M.A."/>
            <person name="Sanders M."/>
            <person name="Walker D."/>
            <person name="Whitehead S."/>
            <person name="Salmond G.P.C."/>
            <person name="Birch P.R.J."/>
            <person name="Parkhill J."/>
            <person name="Toth I.K."/>
        </authorList>
    </citation>
    <scope>NUCLEOTIDE SEQUENCE [LARGE SCALE GENOMIC DNA]</scope>
    <source>
        <strain>SCRI 1043 / ATCC BAA-672</strain>
    </source>
</reference>
<organism>
    <name type="scientific">Pectobacterium atrosepticum (strain SCRI 1043 / ATCC BAA-672)</name>
    <name type="common">Erwinia carotovora subsp. atroseptica</name>
    <dbReference type="NCBI Taxonomy" id="218491"/>
    <lineage>
        <taxon>Bacteria</taxon>
        <taxon>Pseudomonadati</taxon>
        <taxon>Pseudomonadota</taxon>
        <taxon>Gammaproteobacteria</taxon>
        <taxon>Enterobacterales</taxon>
        <taxon>Pectobacteriaceae</taxon>
        <taxon>Pectobacterium</taxon>
    </lineage>
</organism>
<keyword id="KW-0028">Amino-acid biosynthesis</keyword>
<keyword id="KW-0368">Histidine biosynthesis</keyword>
<keyword id="KW-0378">Hydrolase</keyword>
<keyword id="KW-0486">Methionine biosynthesis</keyword>
<keyword id="KW-0511">Multifunctional enzyme</keyword>
<keyword id="KW-0521">NADP</keyword>
<keyword id="KW-0554">One-carbon metabolism</keyword>
<keyword id="KW-0560">Oxidoreductase</keyword>
<keyword id="KW-0658">Purine biosynthesis</keyword>
<keyword id="KW-1185">Reference proteome</keyword>
<accession>Q6D2E6</accession>
<evidence type="ECO:0000255" key="1">
    <source>
        <dbReference type="HAMAP-Rule" id="MF_01576"/>
    </source>
</evidence>
<name>FOLD_PECAS</name>
<dbReference type="EC" id="1.5.1.5" evidence="1"/>
<dbReference type="EC" id="3.5.4.9" evidence="1"/>
<dbReference type="EMBL" id="BX950851">
    <property type="protein sequence ID" value="CAG76048.1"/>
    <property type="molecule type" value="Genomic_DNA"/>
</dbReference>
<dbReference type="RefSeq" id="WP_011094672.1">
    <property type="nucleotide sequence ID" value="NC_004547.2"/>
</dbReference>
<dbReference type="SMR" id="Q6D2E6"/>
<dbReference type="STRING" id="218491.ECA3149"/>
<dbReference type="KEGG" id="eca:ECA3149"/>
<dbReference type="PATRIC" id="fig|218491.5.peg.3186"/>
<dbReference type="eggNOG" id="COG0190">
    <property type="taxonomic scope" value="Bacteria"/>
</dbReference>
<dbReference type="HOGENOM" id="CLU_034045_2_1_6"/>
<dbReference type="OrthoDB" id="9803580at2"/>
<dbReference type="UniPathway" id="UPA00193"/>
<dbReference type="Proteomes" id="UP000007966">
    <property type="component" value="Chromosome"/>
</dbReference>
<dbReference type="GO" id="GO:0005829">
    <property type="term" value="C:cytosol"/>
    <property type="evidence" value="ECO:0007669"/>
    <property type="project" value="TreeGrafter"/>
</dbReference>
<dbReference type="GO" id="GO:0004477">
    <property type="term" value="F:methenyltetrahydrofolate cyclohydrolase activity"/>
    <property type="evidence" value="ECO:0007669"/>
    <property type="project" value="UniProtKB-UniRule"/>
</dbReference>
<dbReference type="GO" id="GO:0004488">
    <property type="term" value="F:methylenetetrahydrofolate dehydrogenase (NADP+) activity"/>
    <property type="evidence" value="ECO:0007669"/>
    <property type="project" value="UniProtKB-UniRule"/>
</dbReference>
<dbReference type="GO" id="GO:0000105">
    <property type="term" value="P:L-histidine biosynthetic process"/>
    <property type="evidence" value="ECO:0007669"/>
    <property type="project" value="UniProtKB-KW"/>
</dbReference>
<dbReference type="GO" id="GO:0009086">
    <property type="term" value="P:methionine biosynthetic process"/>
    <property type="evidence" value="ECO:0007669"/>
    <property type="project" value="UniProtKB-KW"/>
</dbReference>
<dbReference type="GO" id="GO:0006164">
    <property type="term" value="P:purine nucleotide biosynthetic process"/>
    <property type="evidence" value="ECO:0007669"/>
    <property type="project" value="UniProtKB-KW"/>
</dbReference>
<dbReference type="GO" id="GO:0035999">
    <property type="term" value="P:tetrahydrofolate interconversion"/>
    <property type="evidence" value="ECO:0007669"/>
    <property type="project" value="UniProtKB-UniRule"/>
</dbReference>
<dbReference type="CDD" id="cd01080">
    <property type="entry name" value="NAD_bind_m-THF_DH_Cyclohyd"/>
    <property type="match status" value="1"/>
</dbReference>
<dbReference type="FunFam" id="3.40.50.10860:FF:000001">
    <property type="entry name" value="Bifunctional protein FolD"/>
    <property type="match status" value="1"/>
</dbReference>
<dbReference type="FunFam" id="3.40.50.720:FF:000006">
    <property type="entry name" value="Bifunctional protein FolD"/>
    <property type="match status" value="1"/>
</dbReference>
<dbReference type="Gene3D" id="3.40.50.10860">
    <property type="entry name" value="Leucine Dehydrogenase, chain A, domain 1"/>
    <property type="match status" value="1"/>
</dbReference>
<dbReference type="Gene3D" id="3.40.50.720">
    <property type="entry name" value="NAD(P)-binding Rossmann-like Domain"/>
    <property type="match status" value="1"/>
</dbReference>
<dbReference type="HAMAP" id="MF_01576">
    <property type="entry name" value="THF_DHG_CYH"/>
    <property type="match status" value="1"/>
</dbReference>
<dbReference type="InterPro" id="IPR046346">
    <property type="entry name" value="Aminoacid_DH-like_N_sf"/>
</dbReference>
<dbReference type="InterPro" id="IPR036291">
    <property type="entry name" value="NAD(P)-bd_dom_sf"/>
</dbReference>
<dbReference type="InterPro" id="IPR000672">
    <property type="entry name" value="THF_DH/CycHdrlase"/>
</dbReference>
<dbReference type="InterPro" id="IPR020630">
    <property type="entry name" value="THF_DH/CycHdrlase_cat_dom"/>
</dbReference>
<dbReference type="InterPro" id="IPR020867">
    <property type="entry name" value="THF_DH/CycHdrlase_CS"/>
</dbReference>
<dbReference type="InterPro" id="IPR020631">
    <property type="entry name" value="THF_DH/CycHdrlase_NAD-bd_dom"/>
</dbReference>
<dbReference type="NCBIfam" id="NF008058">
    <property type="entry name" value="PRK10792.1"/>
    <property type="match status" value="1"/>
</dbReference>
<dbReference type="NCBIfam" id="NF010783">
    <property type="entry name" value="PRK14186.1"/>
    <property type="match status" value="1"/>
</dbReference>
<dbReference type="PANTHER" id="PTHR48099:SF5">
    <property type="entry name" value="C-1-TETRAHYDROFOLATE SYNTHASE, CYTOPLASMIC"/>
    <property type="match status" value="1"/>
</dbReference>
<dbReference type="PANTHER" id="PTHR48099">
    <property type="entry name" value="C-1-TETRAHYDROFOLATE SYNTHASE, CYTOPLASMIC-RELATED"/>
    <property type="match status" value="1"/>
</dbReference>
<dbReference type="Pfam" id="PF00763">
    <property type="entry name" value="THF_DHG_CYH"/>
    <property type="match status" value="1"/>
</dbReference>
<dbReference type="Pfam" id="PF02882">
    <property type="entry name" value="THF_DHG_CYH_C"/>
    <property type="match status" value="1"/>
</dbReference>
<dbReference type="PRINTS" id="PR00085">
    <property type="entry name" value="THFDHDRGNASE"/>
</dbReference>
<dbReference type="SUPFAM" id="SSF53223">
    <property type="entry name" value="Aminoacid dehydrogenase-like, N-terminal domain"/>
    <property type="match status" value="1"/>
</dbReference>
<dbReference type="SUPFAM" id="SSF51735">
    <property type="entry name" value="NAD(P)-binding Rossmann-fold domains"/>
    <property type="match status" value="1"/>
</dbReference>
<dbReference type="PROSITE" id="PS00766">
    <property type="entry name" value="THF_DHG_CYH_1"/>
    <property type="match status" value="1"/>
</dbReference>
<dbReference type="PROSITE" id="PS00767">
    <property type="entry name" value="THF_DHG_CYH_2"/>
    <property type="match status" value="1"/>
</dbReference>